<protein>
    <recommendedName>
        <fullName>Mitochondrial import inner membrane translocase subunit tim50</fullName>
    </recommendedName>
</protein>
<name>TIM50_SCHPO</name>
<feature type="transit peptide" description="Mitochondrion" evidence="2">
    <location>
        <begin position="1"/>
        <end position="27"/>
    </location>
</feature>
<feature type="chain" id="PRO_0000043136" description="Mitochondrial import inner membrane translocase subunit tim50">
    <location>
        <begin position="28"/>
        <end position="452"/>
    </location>
</feature>
<feature type="topological domain" description="Mitochondrial matrix" evidence="2">
    <location>
        <begin position="28"/>
        <end position="99"/>
    </location>
</feature>
<feature type="transmembrane region" description="Helical" evidence="2">
    <location>
        <begin position="100"/>
        <end position="117"/>
    </location>
</feature>
<feature type="topological domain" description="Mitochondrial intermembrane" evidence="2">
    <location>
        <begin position="118"/>
        <end position="452"/>
    </location>
</feature>
<feature type="domain" description="FCP1 homology" evidence="3">
    <location>
        <begin position="172"/>
        <end position="316"/>
    </location>
</feature>
<feature type="region of interest" description="Disordered" evidence="4">
    <location>
        <begin position="30"/>
        <end position="55"/>
    </location>
</feature>
<feature type="region of interest" description="Disordered" evidence="4">
    <location>
        <begin position="433"/>
        <end position="452"/>
    </location>
</feature>
<feature type="compositionally biased region" description="Low complexity" evidence="4">
    <location>
        <begin position="433"/>
        <end position="443"/>
    </location>
</feature>
<organism>
    <name type="scientific">Schizosaccharomyces pombe (strain 972 / ATCC 24843)</name>
    <name type="common">Fission yeast</name>
    <dbReference type="NCBI Taxonomy" id="284812"/>
    <lineage>
        <taxon>Eukaryota</taxon>
        <taxon>Fungi</taxon>
        <taxon>Dikarya</taxon>
        <taxon>Ascomycota</taxon>
        <taxon>Taphrinomycotina</taxon>
        <taxon>Schizosaccharomycetes</taxon>
        <taxon>Schizosaccharomycetales</taxon>
        <taxon>Schizosaccharomycetaceae</taxon>
        <taxon>Schizosaccharomyces</taxon>
    </lineage>
</organism>
<reference key="1">
    <citation type="journal article" date="2000" name="Yeast">
        <title>A 38 kb segment containing the cdc2 gene from the left arm of fission yeast chromosome II: sequence analysis and characterization of the genomic DNA and cDNAs encoded on the segment.</title>
        <authorList>
            <person name="Machida M."/>
            <person name="Yamazaki S."/>
            <person name="Kunihiro S."/>
            <person name="Tanaka T."/>
            <person name="Kushida N."/>
            <person name="Jinno K."/>
            <person name="Haikawa Y."/>
            <person name="Yamazaki J."/>
            <person name="Yamamoto S."/>
            <person name="Sekine M."/>
            <person name="Oguchi A."/>
            <person name="Nagai Y."/>
            <person name="Sakai M."/>
            <person name="Aoki K."/>
            <person name="Ogura K."/>
            <person name="Kudoh Y."/>
            <person name="Kikuchi H."/>
            <person name="Zhang M.Q."/>
            <person name="Yanagida M."/>
        </authorList>
    </citation>
    <scope>NUCLEOTIDE SEQUENCE [LARGE SCALE GENOMIC DNA]</scope>
    <source>
        <strain>972 / ATCC 24843</strain>
    </source>
</reference>
<reference key="2">
    <citation type="journal article" date="2002" name="Nature">
        <title>The genome sequence of Schizosaccharomyces pombe.</title>
        <authorList>
            <person name="Wood V."/>
            <person name="Gwilliam R."/>
            <person name="Rajandream M.A."/>
            <person name="Lyne M.H."/>
            <person name="Lyne R."/>
            <person name="Stewart A."/>
            <person name="Sgouros J.G."/>
            <person name="Peat N."/>
            <person name="Hayles J."/>
            <person name="Baker S.G."/>
            <person name="Basham D."/>
            <person name="Bowman S."/>
            <person name="Brooks K."/>
            <person name="Brown D."/>
            <person name="Brown S."/>
            <person name="Chillingworth T."/>
            <person name="Churcher C.M."/>
            <person name="Collins M."/>
            <person name="Connor R."/>
            <person name="Cronin A."/>
            <person name="Davis P."/>
            <person name="Feltwell T."/>
            <person name="Fraser A."/>
            <person name="Gentles S."/>
            <person name="Goble A."/>
            <person name="Hamlin N."/>
            <person name="Harris D.E."/>
            <person name="Hidalgo J."/>
            <person name="Hodgson G."/>
            <person name="Holroyd S."/>
            <person name="Hornsby T."/>
            <person name="Howarth S."/>
            <person name="Huckle E.J."/>
            <person name="Hunt S."/>
            <person name="Jagels K."/>
            <person name="James K.D."/>
            <person name="Jones L."/>
            <person name="Jones M."/>
            <person name="Leather S."/>
            <person name="McDonald S."/>
            <person name="McLean J."/>
            <person name="Mooney P."/>
            <person name="Moule S."/>
            <person name="Mungall K.L."/>
            <person name="Murphy L.D."/>
            <person name="Niblett D."/>
            <person name="Odell C."/>
            <person name="Oliver K."/>
            <person name="O'Neil S."/>
            <person name="Pearson D."/>
            <person name="Quail M.A."/>
            <person name="Rabbinowitsch E."/>
            <person name="Rutherford K.M."/>
            <person name="Rutter S."/>
            <person name="Saunders D."/>
            <person name="Seeger K."/>
            <person name="Sharp S."/>
            <person name="Skelton J."/>
            <person name="Simmonds M.N."/>
            <person name="Squares R."/>
            <person name="Squares S."/>
            <person name="Stevens K."/>
            <person name="Taylor K."/>
            <person name="Taylor R.G."/>
            <person name="Tivey A."/>
            <person name="Walsh S.V."/>
            <person name="Warren T."/>
            <person name="Whitehead S."/>
            <person name="Woodward J.R."/>
            <person name="Volckaert G."/>
            <person name="Aert R."/>
            <person name="Robben J."/>
            <person name="Grymonprez B."/>
            <person name="Weltjens I."/>
            <person name="Vanstreels E."/>
            <person name="Rieger M."/>
            <person name="Schaefer M."/>
            <person name="Mueller-Auer S."/>
            <person name="Gabel C."/>
            <person name="Fuchs M."/>
            <person name="Duesterhoeft A."/>
            <person name="Fritzc C."/>
            <person name="Holzer E."/>
            <person name="Moestl D."/>
            <person name="Hilbert H."/>
            <person name="Borzym K."/>
            <person name="Langer I."/>
            <person name="Beck A."/>
            <person name="Lehrach H."/>
            <person name="Reinhardt R."/>
            <person name="Pohl T.M."/>
            <person name="Eger P."/>
            <person name="Zimmermann W."/>
            <person name="Wedler H."/>
            <person name="Wambutt R."/>
            <person name="Purnelle B."/>
            <person name="Goffeau A."/>
            <person name="Cadieu E."/>
            <person name="Dreano S."/>
            <person name="Gloux S."/>
            <person name="Lelaure V."/>
            <person name="Mottier S."/>
            <person name="Galibert F."/>
            <person name="Aves S.J."/>
            <person name="Xiang Z."/>
            <person name="Hunt C."/>
            <person name="Moore K."/>
            <person name="Hurst S.M."/>
            <person name="Lucas M."/>
            <person name="Rochet M."/>
            <person name="Gaillardin C."/>
            <person name="Tallada V.A."/>
            <person name="Garzon A."/>
            <person name="Thode G."/>
            <person name="Daga R.R."/>
            <person name="Cruzado L."/>
            <person name="Jimenez J."/>
            <person name="Sanchez M."/>
            <person name="del Rey F."/>
            <person name="Benito J."/>
            <person name="Dominguez A."/>
            <person name="Revuelta J.L."/>
            <person name="Moreno S."/>
            <person name="Armstrong J."/>
            <person name="Forsburg S.L."/>
            <person name="Cerutti L."/>
            <person name="Lowe T."/>
            <person name="McCombie W.R."/>
            <person name="Paulsen I."/>
            <person name="Potashkin J."/>
            <person name="Shpakovski G.V."/>
            <person name="Ussery D."/>
            <person name="Barrell B.G."/>
            <person name="Nurse P."/>
        </authorList>
    </citation>
    <scope>NUCLEOTIDE SEQUENCE [LARGE SCALE GENOMIC DNA]</scope>
    <source>
        <strain>972 / ATCC 24843</strain>
    </source>
</reference>
<gene>
    <name type="primary">tim50</name>
    <name type="ORF">pi044</name>
    <name type="ORF">SPBC17A3.01c</name>
    <name type="ORF">SPBC8D2.21c</name>
</gene>
<dbReference type="EMBL" id="AB004537">
    <property type="protein sequence ID" value="BAA21424.1"/>
    <property type="molecule type" value="Genomic_DNA"/>
</dbReference>
<dbReference type="EMBL" id="CU329671">
    <property type="protein sequence ID" value="CAA17836.2"/>
    <property type="molecule type" value="Genomic_DNA"/>
</dbReference>
<dbReference type="PIR" id="T39693">
    <property type="entry name" value="T39693"/>
</dbReference>
<dbReference type="RefSeq" id="NP_595583.2">
    <property type="nucleotide sequence ID" value="NM_001021478.3"/>
</dbReference>
<dbReference type="SMR" id="O13636"/>
<dbReference type="ComplexPortal" id="CPX-540">
    <property type="entry name" value="Mitochondrial inner membrane pre-sequence translocase complex"/>
</dbReference>
<dbReference type="FunCoup" id="O13636">
    <property type="interactions" value="99"/>
</dbReference>
<dbReference type="STRING" id="284812.O13636"/>
<dbReference type="PaxDb" id="4896-SPBC17A3.01c.1"/>
<dbReference type="EnsemblFungi" id="SPBC17A3.01c.1">
    <property type="protein sequence ID" value="SPBC17A3.01c.1:pep"/>
    <property type="gene ID" value="SPBC17A3.01c"/>
</dbReference>
<dbReference type="GeneID" id="2539802"/>
<dbReference type="KEGG" id="spo:2539802"/>
<dbReference type="PomBase" id="SPBC17A3.01c">
    <property type="gene designation" value="tim50"/>
</dbReference>
<dbReference type="VEuPathDB" id="FungiDB:SPBC17A3.01c"/>
<dbReference type="eggNOG" id="KOG2832">
    <property type="taxonomic scope" value="Eukaryota"/>
</dbReference>
<dbReference type="HOGENOM" id="CLU_023309_1_0_1"/>
<dbReference type="InParanoid" id="O13636"/>
<dbReference type="OMA" id="NLRQPYT"/>
<dbReference type="PhylomeDB" id="O13636"/>
<dbReference type="PRO" id="PR:O13636"/>
<dbReference type="Proteomes" id="UP000002485">
    <property type="component" value="Chromosome II"/>
</dbReference>
<dbReference type="GO" id="GO:0005739">
    <property type="term" value="C:mitochondrion"/>
    <property type="evidence" value="ECO:0007005"/>
    <property type="project" value="PomBase"/>
</dbReference>
<dbReference type="GO" id="GO:0005744">
    <property type="term" value="C:TIM23 mitochondrial import inner membrane translocase complex"/>
    <property type="evidence" value="ECO:0000318"/>
    <property type="project" value="GO_Central"/>
</dbReference>
<dbReference type="GO" id="GO:0016887">
    <property type="term" value="F:ATP hydrolysis activity"/>
    <property type="evidence" value="ECO:0000305"/>
    <property type="project" value="PomBase"/>
</dbReference>
<dbReference type="GO" id="GO:0006886">
    <property type="term" value="P:intracellular protein transport"/>
    <property type="evidence" value="ECO:0000304"/>
    <property type="project" value="PomBase"/>
</dbReference>
<dbReference type="GO" id="GO:0030150">
    <property type="term" value="P:protein import into mitochondrial matrix"/>
    <property type="evidence" value="ECO:0000250"/>
    <property type="project" value="PomBase"/>
</dbReference>
<dbReference type="CDD" id="cd07521">
    <property type="entry name" value="HAD_FCP1-like"/>
    <property type="match status" value="1"/>
</dbReference>
<dbReference type="FunFam" id="3.40.50.1000:FF:000019">
    <property type="entry name" value="Mitochondrial import inner membrane translocase subunit TIM50"/>
    <property type="match status" value="1"/>
</dbReference>
<dbReference type="Gene3D" id="3.40.50.1000">
    <property type="entry name" value="HAD superfamily/HAD-like"/>
    <property type="match status" value="1"/>
</dbReference>
<dbReference type="InterPro" id="IPR004274">
    <property type="entry name" value="FCP1_dom"/>
</dbReference>
<dbReference type="InterPro" id="IPR036412">
    <property type="entry name" value="HAD-like_sf"/>
</dbReference>
<dbReference type="InterPro" id="IPR023214">
    <property type="entry name" value="HAD_sf"/>
</dbReference>
<dbReference type="InterPro" id="IPR050365">
    <property type="entry name" value="TIM50"/>
</dbReference>
<dbReference type="PANTHER" id="PTHR12210">
    <property type="entry name" value="DULLARD PROTEIN PHOSPHATASE"/>
    <property type="match status" value="1"/>
</dbReference>
<dbReference type="Pfam" id="PF03031">
    <property type="entry name" value="NIF"/>
    <property type="match status" value="1"/>
</dbReference>
<dbReference type="SMART" id="SM00577">
    <property type="entry name" value="CPDc"/>
    <property type="match status" value="1"/>
</dbReference>
<dbReference type="SUPFAM" id="SSF56784">
    <property type="entry name" value="HAD-like"/>
    <property type="match status" value="1"/>
</dbReference>
<dbReference type="PROSITE" id="PS50969">
    <property type="entry name" value="FCP1"/>
    <property type="match status" value="1"/>
</dbReference>
<accession>O13636</accession>
<accession>Q7LL08</accession>
<comment type="function">
    <text evidence="1">Essential component of the TIM23 complex, a complex that mediates the translocation of transit peptide-containing proteins across the mitochondrial inner membrane. Required to direct preproteins in transit and direct them to the channel protein TIM23, and possibly facilitates transfer of the translocating proteins from the TOM complex to the TIM23 complex (By similarity).</text>
</comment>
<comment type="subunit">
    <text evidence="1">Component of the TIM23 complex, at least composed of tim23, tim17, tim50 and tim21. Interacts with preproteins in transit (By similarity).</text>
</comment>
<comment type="subcellular location">
    <subcellularLocation>
        <location evidence="1">Mitochondrion inner membrane</location>
        <topology evidence="1">Single-pass membrane protein</topology>
    </subcellularLocation>
</comment>
<comment type="similarity">
    <text evidence="5">Belongs to the TIM50 family.</text>
</comment>
<sequence>MLNRSLLFRNLRLARPRPFLPLVGKRFVTEKSQSQEEKDTSKITENAKEEVKRDTSSLAKESLKLLDLNGLNDESYTGDPGKGPEYTSSTMLKREKQARYAFWGFLGLTGGGLLYYGRRYGPDEKELEKQYPAAGYSPSDWWNRVKARTNNFFSYYQEPAFEKLLPDPLPEPYNRPYTLVLSLDDLLIHSEWTRQHGWRTAKRPGLDYFLGYLSMYYEVVIFTRQYLATAKPIIDKIDPYHVSISAVLTRESSKYEKGKVIKDLSYLNRDLSRVIMIDTNPESWSKQPDNAIAMAPWTGNPKDKELVGLIPLLEFIAIMDIKDVRPVLKSYQGKNIPLEYARREEKLRTKLIEDWNEKKKKGSSFLFGGRSVSEEPPKLIIDIQRERQKAAYAEFKKYIDENGPKMLEEEKAREAEQKTSIFNLLFHPEEVQQQQLEQMQQQQFSPETNASK</sequence>
<evidence type="ECO:0000250" key="1"/>
<evidence type="ECO:0000255" key="2"/>
<evidence type="ECO:0000255" key="3">
    <source>
        <dbReference type="PROSITE-ProRule" id="PRU00336"/>
    </source>
</evidence>
<evidence type="ECO:0000256" key="4">
    <source>
        <dbReference type="SAM" id="MobiDB-lite"/>
    </source>
</evidence>
<evidence type="ECO:0000305" key="5"/>
<keyword id="KW-0472">Membrane</keyword>
<keyword id="KW-0496">Mitochondrion</keyword>
<keyword id="KW-0999">Mitochondrion inner membrane</keyword>
<keyword id="KW-0653">Protein transport</keyword>
<keyword id="KW-1185">Reference proteome</keyword>
<keyword id="KW-0809">Transit peptide</keyword>
<keyword id="KW-0811">Translocation</keyword>
<keyword id="KW-0812">Transmembrane</keyword>
<keyword id="KW-1133">Transmembrane helix</keyword>
<keyword id="KW-0813">Transport</keyword>
<proteinExistence type="inferred from homology"/>